<accession>P36617</accession>
<evidence type="ECO:0000255" key="1"/>
<evidence type="ECO:0000256" key="2">
    <source>
        <dbReference type="SAM" id="MobiDB-lite"/>
    </source>
</evidence>
<evidence type="ECO:0000269" key="3">
    <source>
    </source>
</evidence>
<evidence type="ECO:0000269" key="4">
    <source>
    </source>
</evidence>
<evidence type="ECO:0000269" key="5">
    <source>
    </source>
</evidence>
<evidence type="ECO:0000269" key="6">
    <source>
    </source>
</evidence>
<evidence type="ECO:0000269" key="7">
    <source>
    </source>
</evidence>
<evidence type="ECO:0000305" key="8"/>
<gene>
    <name type="primary">rad16</name>
    <name type="synonym">rad10</name>
    <name type="synonym">rad20</name>
    <name type="synonym">swi9</name>
    <name type="ORF">SPCC970.01</name>
</gene>
<comment type="function">
    <text evidence="3 4 5">Endonuclease that specifically degrades single-stranded DNA and which is involved in nucleotide excision repair of DNA damaged with UV light, bulky adducts, or cross-linking agents. Required for double strand break-induced interchromosomal gene conversion.</text>
</comment>
<comment type="subunit">
    <text>Heterodimer composed of rad16 and swi10.</text>
</comment>
<comment type="interaction">
    <interactant intactId="EBI-16120215">
        <id>P36617</id>
    </interactant>
    <interactant intactId="EBI-16120253">
        <id>O94542</id>
        <label>SPCC1322.02</label>
    </interactant>
    <organismsDiffer>false</organismsDiffer>
    <experiments>4</experiments>
</comment>
<comment type="interaction">
    <interactant intactId="EBI-16120215">
        <id>P36617</id>
    </interactant>
    <interactant intactId="EBI-16120325">
        <id>Q06182</id>
        <label>swi10</label>
    </interactant>
    <organismsDiffer>false</organismsDiffer>
    <experiments>2</experiments>
</comment>
<comment type="subcellular location">
    <subcellularLocation>
        <location evidence="6">Nucleus</location>
    </subcellularLocation>
    <subcellularLocation>
        <location evidence="6">Cytoplasm</location>
        <location evidence="6">Cytoskeleton</location>
        <location evidence="6">Microtubule organizing center</location>
        <location evidence="6">Spindle pole body</location>
    </subcellularLocation>
</comment>
<comment type="similarity">
    <text evidence="8">Belongs to the XPF family.</text>
</comment>
<comment type="sequence caution" evidence="8">
    <conflict type="erroneous gene model prediction">
        <sequence resource="EMBL-CDS" id="CAA50599"/>
    </conflict>
</comment>
<feature type="chain" id="PRO_0000198856" description="DNA repair protein rad16">
    <location>
        <begin position="1"/>
        <end position="877"/>
    </location>
</feature>
<feature type="domain" description="ERCC4">
    <location>
        <begin position="652"/>
        <end position="732"/>
    </location>
</feature>
<feature type="region of interest" description="Disordered" evidence="2">
    <location>
        <begin position="440"/>
        <end position="490"/>
    </location>
</feature>
<feature type="compositionally biased region" description="Basic and acidic residues" evidence="2">
    <location>
        <begin position="444"/>
        <end position="454"/>
    </location>
</feature>
<feature type="compositionally biased region" description="Polar residues" evidence="2">
    <location>
        <begin position="475"/>
        <end position="490"/>
    </location>
</feature>
<feature type="modified residue" description="Phosphoserine; by CK2" evidence="1">
    <location>
        <position position="71"/>
    </location>
</feature>
<feature type="mutagenesis site" description="In swi9." evidence="7">
    <original>E</original>
    <variation>K</variation>
    <location>
        <position position="659"/>
    </location>
</feature>
<keyword id="KW-0963">Cytoplasm</keyword>
<keyword id="KW-0206">Cytoskeleton</keyword>
<keyword id="KW-0227">DNA damage</keyword>
<keyword id="KW-0234">DNA repair</keyword>
<keyword id="KW-0238">DNA-binding</keyword>
<keyword id="KW-0255">Endonuclease</keyword>
<keyword id="KW-0378">Hydrolase</keyword>
<keyword id="KW-0540">Nuclease</keyword>
<keyword id="KW-0539">Nucleus</keyword>
<keyword id="KW-0597">Phosphoprotein</keyword>
<keyword id="KW-1185">Reference proteome</keyword>
<organism>
    <name type="scientific">Schizosaccharomyces pombe (strain 972 / ATCC 24843)</name>
    <name type="common">Fission yeast</name>
    <dbReference type="NCBI Taxonomy" id="284812"/>
    <lineage>
        <taxon>Eukaryota</taxon>
        <taxon>Fungi</taxon>
        <taxon>Dikarya</taxon>
        <taxon>Ascomycota</taxon>
        <taxon>Taphrinomycotina</taxon>
        <taxon>Schizosaccharomycetes</taxon>
        <taxon>Schizosaccharomycetales</taxon>
        <taxon>Schizosaccharomycetaceae</taxon>
        <taxon>Schizosaccharomyces</taxon>
    </lineage>
</organism>
<proteinExistence type="evidence at protein level"/>
<sequence length="877" mass="100264">METKVHLPLAYQQQVFNELIEEDGLCVIAPGLSLLQIAANVLSYFAVPGSLLLLVGANVDDIELIQHEMESHLEKKLITVNTETMSVDKREKSYLEGGIFAITSRILVMDLLTKIIPTEKITGIVLLHADRVVSTGTVAFIMRLYRETNKTGFIKAFSDDPEQFLMGINALSHCLRCLFLRHVFIYPRFHVVVAESLEKSPANVVELNVNLSDSQKTIQSCLLTCIESTMRELRRLNSAYLDMEDWNIESALHRSFDVIVRRQLDSVWHRVSPKTKQLVGDLSTLKFLLSALVCYDCVSFLKLLDTLVLSVNVSSYPSNAQPSPWLMLDAANKMIRVARDRVYKESEGPNMDAIPILEEQPKWSVLQDVLNEVCHETMLADTDAETSNNSIMIMCADERTCLQLRDYLSTVTYDNKDSLKNMNSKLVDYFQWREQYRKMSKSIKKPEPSKEREASNTTSRKGVPPSKRRRVRGGNNATSRTTSDNTDANDSFSRDLRLEKILLSHLSKRYEPEVGNDAFEVIDDFNSIYIYSYNGERDELVLNNLRPRYVIMFDSDPNFIRRVEVYKATYPKRSLRVYFMYYGGSIEEQKYLFSVRREKDSFSRLIKERSNMAIVLTADSERFESQESKFLRNVNTRIAGGGQLSITNEKPRVIVDLREFRSSLPSILHGNNFSVIPCQLLVGDYILSPKICVERKSIRDLIQSLSNGRLYSQCEAMTEYYEIPVLLIEFEQHQSFTSPPFSDLSSEIGKNDVQSKLVLLTLSFPNLRIVWSSSAYVTSIIFQDLKAMEQEPDPASAASIGLEAGQDSTNTYNQAPLDLLMGLPYITMKNYRNVFYGGVKDIQEASETSERKWSELIGPEAGRRLYSFFRKQLKDYE</sequence>
<protein>
    <recommendedName>
        <fullName>DNA repair protein rad16</fullName>
        <ecNumber>3.1.-.-</ecNumber>
    </recommendedName>
</protein>
<reference key="1">
    <citation type="journal article" date="1994" name="Mol. Cell. Biol.">
        <title>The rad16 gene of Schizosaccharomyces pombe: a homolog of the RAD1 gene of Saccharomyces cerevisiae.</title>
        <authorList>
            <person name="Carr A.M."/>
            <person name="Schmidt H."/>
            <person name="Kirchoff S."/>
            <person name="Muriel W.J."/>
            <person name="Sheldrick K.S."/>
            <person name="Griffiths D.J."/>
            <person name="Basmacioglu C.N."/>
            <person name="Subramani S."/>
            <person name="Clegg M."/>
            <person name="Nasim A."/>
            <person name="Lehmann A.R."/>
        </authorList>
    </citation>
    <scope>NUCLEOTIDE SEQUENCE [GENOMIC DNA]</scope>
    <scope>MUTAGENESIS OF GLU-659</scope>
</reference>
<reference key="2">
    <citation type="journal article" date="2002" name="Nature">
        <title>The genome sequence of Schizosaccharomyces pombe.</title>
        <authorList>
            <person name="Wood V."/>
            <person name="Gwilliam R."/>
            <person name="Rajandream M.A."/>
            <person name="Lyne M.H."/>
            <person name="Lyne R."/>
            <person name="Stewart A."/>
            <person name="Sgouros J.G."/>
            <person name="Peat N."/>
            <person name="Hayles J."/>
            <person name="Baker S.G."/>
            <person name="Basham D."/>
            <person name="Bowman S."/>
            <person name="Brooks K."/>
            <person name="Brown D."/>
            <person name="Brown S."/>
            <person name="Chillingworth T."/>
            <person name="Churcher C.M."/>
            <person name="Collins M."/>
            <person name="Connor R."/>
            <person name="Cronin A."/>
            <person name="Davis P."/>
            <person name="Feltwell T."/>
            <person name="Fraser A."/>
            <person name="Gentles S."/>
            <person name="Goble A."/>
            <person name="Hamlin N."/>
            <person name="Harris D.E."/>
            <person name="Hidalgo J."/>
            <person name="Hodgson G."/>
            <person name="Holroyd S."/>
            <person name="Hornsby T."/>
            <person name="Howarth S."/>
            <person name="Huckle E.J."/>
            <person name="Hunt S."/>
            <person name="Jagels K."/>
            <person name="James K.D."/>
            <person name="Jones L."/>
            <person name="Jones M."/>
            <person name="Leather S."/>
            <person name="McDonald S."/>
            <person name="McLean J."/>
            <person name="Mooney P."/>
            <person name="Moule S."/>
            <person name="Mungall K.L."/>
            <person name="Murphy L.D."/>
            <person name="Niblett D."/>
            <person name="Odell C."/>
            <person name="Oliver K."/>
            <person name="O'Neil S."/>
            <person name="Pearson D."/>
            <person name="Quail M.A."/>
            <person name="Rabbinowitsch E."/>
            <person name="Rutherford K.M."/>
            <person name="Rutter S."/>
            <person name="Saunders D."/>
            <person name="Seeger K."/>
            <person name="Sharp S."/>
            <person name="Skelton J."/>
            <person name="Simmonds M.N."/>
            <person name="Squares R."/>
            <person name="Squares S."/>
            <person name="Stevens K."/>
            <person name="Taylor K."/>
            <person name="Taylor R.G."/>
            <person name="Tivey A."/>
            <person name="Walsh S.V."/>
            <person name="Warren T."/>
            <person name="Whitehead S."/>
            <person name="Woodward J.R."/>
            <person name="Volckaert G."/>
            <person name="Aert R."/>
            <person name="Robben J."/>
            <person name="Grymonprez B."/>
            <person name="Weltjens I."/>
            <person name="Vanstreels E."/>
            <person name="Rieger M."/>
            <person name="Schaefer M."/>
            <person name="Mueller-Auer S."/>
            <person name="Gabel C."/>
            <person name="Fuchs M."/>
            <person name="Duesterhoeft A."/>
            <person name="Fritzc C."/>
            <person name="Holzer E."/>
            <person name="Moestl D."/>
            <person name="Hilbert H."/>
            <person name="Borzym K."/>
            <person name="Langer I."/>
            <person name="Beck A."/>
            <person name="Lehrach H."/>
            <person name="Reinhardt R."/>
            <person name="Pohl T.M."/>
            <person name="Eger P."/>
            <person name="Zimmermann W."/>
            <person name="Wedler H."/>
            <person name="Wambutt R."/>
            <person name="Purnelle B."/>
            <person name="Goffeau A."/>
            <person name="Cadieu E."/>
            <person name="Dreano S."/>
            <person name="Gloux S."/>
            <person name="Lelaure V."/>
            <person name="Mottier S."/>
            <person name="Galibert F."/>
            <person name="Aves S.J."/>
            <person name="Xiang Z."/>
            <person name="Hunt C."/>
            <person name="Moore K."/>
            <person name="Hurst S.M."/>
            <person name="Lucas M."/>
            <person name="Rochet M."/>
            <person name="Gaillardin C."/>
            <person name="Tallada V.A."/>
            <person name="Garzon A."/>
            <person name="Thode G."/>
            <person name="Daga R.R."/>
            <person name="Cruzado L."/>
            <person name="Jimenez J."/>
            <person name="Sanchez M."/>
            <person name="del Rey F."/>
            <person name="Benito J."/>
            <person name="Dominguez A."/>
            <person name="Revuelta J.L."/>
            <person name="Moreno S."/>
            <person name="Armstrong J."/>
            <person name="Forsburg S.L."/>
            <person name="Cerutti L."/>
            <person name="Lowe T."/>
            <person name="McCombie W.R."/>
            <person name="Paulsen I."/>
            <person name="Potashkin J."/>
            <person name="Shpakovski G.V."/>
            <person name="Ussery D."/>
            <person name="Barrell B.G."/>
            <person name="Nurse P."/>
        </authorList>
    </citation>
    <scope>NUCLEOTIDE SEQUENCE [LARGE SCALE GENOMIC DNA]</scope>
    <source>
        <strain>972 / ATCC 24843</strain>
    </source>
</reference>
<reference key="3">
    <citation type="journal article" date="2011" name="Science">
        <title>Comparative functional genomics of the fission yeasts.</title>
        <authorList>
            <person name="Rhind N."/>
            <person name="Chen Z."/>
            <person name="Yassour M."/>
            <person name="Thompson D.A."/>
            <person name="Haas B.J."/>
            <person name="Habib N."/>
            <person name="Wapinski I."/>
            <person name="Roy S."/>
            <person name="Lin M.F."/>
            <person name="Heiman D.I."/>
            <person name="Young S.K."/>
            <person name="Furuya K."/>
            <person name="Guo Y."/>
            <person name="Pidoux A."/>
            <person name="Chen H.M."/>
            <person name="Robbertse B."/>
            <person name="Goldberg J.M."/>
            <person name="Aoki K."/>
            <person name="Bayne E.H."/>
            <person name="Berlin A.M."/>
            <person name="Desjardins C.A."/>
            <person name="Dobbs E."/>
            <person name="Dukaj L."/>
            <person name="Fan L."/>
            <person name="FitzGerald M.G."/>
            <person name="French C."/>
            <person name="Gujja S."/>
            <person name="Hansen K."/>
            <person name="Keifenheim D."/>
            <person name="Levin J.Z."/>
            <person name="Mosher R.A."/>
            <person name="Mueller C.A."/>
            <person name="Pfiffner J."/>
            <person name="Priest M."/>
            <person name="Russ C."/>
            <person name="Smialowska A."/>
            <person name="Swoboda P."/>
            <person name="Sykes S.M."/>
            <person name="Vaughn M."/>
            <person name="Vengrova S."/>
            <person name="Yoder R."/>
            <person name="Zeng Q."/>
            <person name="Allshire R."/>
            <person name="Baulcombe D."/>
            <person name="Birren B.W."/>
            <person name="Brown W."/>
            <person name="Ekwall K."/>
            <person name="Kellis M."/>
            <person name="Leatherwood J."/>
            <person name="Levin H."/>
            <person name="Margalit H."/>
            <person name="Martienssen R."/>
            <person name="Nieduszynski C.A."/>
            <person name="Spatafora J.W."/>
            <person name="Friedman N."/>
            <person name="Dalgaard J.Z."/>
            <person name="Baumann P."/>
            <person name="Niki H."/>
            <person name="Regev A."/>
            <person name="Nusbaum C."/>
        </authorList>
    </citation>
    <scope>REVISION OF GENE MODEL</scope>
</reference>
<reference key="4">
    <citation type="journal article" date="1975" name="Genetics">
        <title>Genetic control of radiation sensitivity in Schizosaccharomyces pombe.</title>
        <authorList>
            <person name="Nasim A."/>
            <person name="Smith B.P."/>
        </authorList>
    </citation>
    <scope>FUNCTION</scope>
</reference>
<reference key="5">
    <citation type="journal article" date="1999" name="Nat. Genet.">
        <title>Involvement of nucleotide-excision repair in msh2 pms1-independent mismatch repair.</title>
        <authorList>
            <person name="Fleck O."/>
            <person name="Lehmann E."/>
            <person name="Schaer P."/>
            <person name="Kohli J."/>
        </authorList>
    </citation>
    <scope>FUNCTION</scope>
</reference>
<reference key="6">
    <citation type="journal article" date="2003" name="EMBO J.">
        <title>Pathway utilization in response to a site-specific DNA double-strand break in fission yeast.</title>
        <authorList>
            <person name="Prudden J."/>
            <person name="Evans J.S."/>
            <person name="Hussey S.P."/>
            <person name="Deans B."/>
            <person name="O'Neill P."/>
            <person name="Thacker J."/>
            <person name="Humphrey T."/>
        </authorList>
    </citation>
    <scope>FUNCTION</scope>
</reference>
<reference key="7">
    <citation type="journal article" date="2006" name="Nat. Biotechnol.">
        <title>ORFeome cloning and global analysis of protein localization in the fission yeast Schizosaccharomyces pombe.</title>
        <authorList>
            <person name="Matsuyama A."/>
            <person name="Arai R."/>
            <person name="Yashiroda Y."/>
            <person name="Shirai A."/>
            <person name="Kamata A."/>
            <person name="Sekido S."/>
            <person name="Kobayashi Y."/>
            <person name="Hashimoto A."/>
            <person name="Hamamoto M."/>
            <person name="Hiraoka Y."/>
            <person name="Horinouchi S."/>
            <person name="Yoshida M."/>
        </authorList>
    </citation>
    <scope>SUBCELLULAR LOCATION [LARGE SCALE ANALYSIS]</scope>
</reference>
<dbReference type="EC" id="3.1.-.-"/>
<dbReference type="EMBL" id="X71595">
    <property type="protein sequence ID" value="CAA50599.1"/>
    <property type="status" value="ALT_SEQ"/>
    <property type="molecule type" value="Genomic_DNA"/>
</dbReference>
<dbReference type="EMBL" id="CU329672">
    <property type="protein sequence ID" value="CAA20694.2"/>
    <property type="molecule type" value="Genomic_DNA"/>
</dbReference>
<dbReference type="PIR" id="A56213">
    <property type="entry name" value="A56213"/>
</dbReference>
<dbReference type="RefSeq" id="NP_587855.2">
    <property type="nucleotide sequence ID" value="NM_001022848.2"/>
</dbReference>
<dbReference type="SMR" id="P36617"/>
<dbReference type="BioGRID" id="275343">
    <property type="interactions" value="32"/>
</dbReference>
<dbReference type="DIP" id="DIP-61015N"/>
<dbReference type="FunCoup" id="P36617">
    <property type="interactions" value="699"/>
</dbReference>
<dbReference type="IntAct" id="P36617">
    <property type="interactions" value="4"/>
</dbReference>
<dbReference type="STRING" id="284812.P36617"/>
<dbReference type="PaxDb" id="4896-SPCC970.01.1"/>
<dbReference type="EnsemblFungi" id="SPCC970.01.1">
    <property type="protein sequence ID" value="SPCC970.01.1:pep"/>
    <property type="gene ID" value="SPCC970.01"/>
</dbReference>
<dbReference type="GeneID" id="2538760"/>
<dbReference type="KEGG" id="spo:2538760"/>
<dbReference type="PomBase" id="SPCC970.01">
    <property type="gene designation" value="rad16"/>
</dbReference>
<dbReference type="VEuPathDB" id="FungiDB:SPCC970.01"/>
<dbReference type="eggNOG" id="KOG0442">
    <property type="taxonomic scope" value="Eukaryota"/>
</dbReference>
<dbReference type="HOGENOM" id="CLU_002265_2_0_1"/>
<dbReference type="InParanoid" id="P36617"/>
<dbReference type="OMA" id="THILDIM"/>
<dbReference type="Reactome" id="R-SPO-5696395">
    <property type="pathway name" value="Formation of Incision Complex in GG-NER"/>
</dbReference>
<dbReference type="Reactome" id="R-SPO-5696400">
    <property type="pathway name" value="Dual Incision in GG-NER"/>
</dbReference>
<dbReference type="Reactome" id="R-SPO-6782135">
    <property type="pathway name" value="Dual incision in TC-NER"/>
</dbReference>
<dbReference type="PRO" id="PR:P36617"/>
<dbReference type="Proteomes" id="UP000002485">
    <property type="component" value="Chromosome III"/>
</dbReference>
<dbReference type="GO" id="GO:0005737">
    <property type="term" value="C:cytoplasm"/>
    <property type="evidence" value="ECO:0007669"/>
    <property type="project" value="UniProtKB-KW"/>
</dbReference>
<dbReference type="GO" id="GO:0044732">
    <property type="term" value="C:mitotic spindle pole body"/>
    <property type="evidence" value="ECO:0007005"/>
    <property type="project" value="PomBase"/>
</dbReference>
<dbReference type="GO" id="GO:0000110">
    <property type="term" value="C:nucleotide-excision repair factor 1 complex"/>
    <property type="evidence" value="ECO:0000353"/>
    <property type="project" value="PomBase"/>
</dbReference>
<dbReference type="GO" id="GO:0005634">
    <property type="term" value="C:nucleus"/>
    <property type="evidence" value="ECO:0007005"/>
    <property type="project" value="PomBase"/>
</dbReference>
<dbReference type="GO" id="GO:1990599">
    <property type="term" value="F:3' overhang single-stranded DNA endodeoxyribonuclease activity"/>
    <property type="evidence" value="ECO:0000314"/>
    <property type="project" value="PomBase"/>
</dbReference>
<dbReference type="GO" id="GO:0003684">
    <property type="term" value="F:damaged DNA binding"/>
    <property type="evidence" value="ECO:0000318"/>
    <property type="project" value="GO_Central"/>
</dbReference>
<dbReference type="GO" id="GO:0003697">
    <property type="term" value="F:single-stranded DNA binding"/>
    <property type="evidence" value="ECO:0000318"/>
    <property type="project" value="GO_Central"/>
</dbReference>
<dbReference type="GO" id="GO:0000014">
    <property type="term" value="F:single-stranded DNA endodeoxyribonuclease activity"/>
    <property type="evidence" value="ECO:0000318"/>
    <property type="project" value="GO_Central"/>
</dbReference>
<dbReference type="GO" id="GO:0000724">
    <property type="term" value="P:double-strand break repair via homologous recombination"/>
    <property type="evidence" value="ECO:0000315"/>
    <property type="project" value="PomBase"/>
</dbReference>
<dbReference type="GO" id="GO:0045002">
    <property type="term" value="P:double-strand break repair via single-strand annealing"/>
    <property type="evidence" value="ECO:0000315"/>
    <property type="project" value="PomBase"/>
</dbReference>
<dbReference type="GO" id="GO:0000736">
    <property type="term" value="P:double-strand break repair via single-strand annealing, removal of nonhomologous ends"/>
    <property type="evidence" value="ECO:0000318"/>
    <property type="project" value="GO_Central"/>
</dbReference>
<dbReference type="GO" id="GO:0007534">
    <property type="term" value="P:gene conversion at mating-type locus"/>
    <property type="evidence" value="ECO:0000315"/>
    <property type="project" value="PomBase"/>
</dbReference>
<dbReference type="GO" id="GO:0007533">
    <property type="term" value="P:mating type switching"/>
    <property type="evidence" value="ECO:0000315"/>
    <property type="project" value="PomBase"/>
</dbReference>
<dbReference type="GO" id="GO:0006289">
    <property type="term" value="P:nucleotide-excision repair"/>
    <property type="evidence" value="ECO:0000316"/>
    <property type="project" value="PomBase"/>
</dbReference>
<dbReference type="GO" id="GO:1901255">
    <property type="term" value="P:nucleotide-excision repair involved in interstrand cross-link repair"/>
    <property type="evidence" value="ECO:0000315"/>
    <property type="project" value="PomBase"/>
</dbReference>
<dbReference type="GO" id="GO:0007131">
    <property type="term" value="P:reciprocal meiotic recombination"/>
    <property type="evidence" value="ECO:0000315"/>
    <property type="project" value="PomBase"/>
</dbReference>
<dbReference type="GO" id="GO:0000712">
    <property type="term" value="P:resolution of meiotic recombination intermediates"/>
    <property type="evidence" value="ECO:0000318"/>
    <property type="project" value="GO_Central"/>
</dbReference>
<dbReference type="CDD" id="cd20078">
    <property type="entry name" value="XPF_nuclease_XPF_euk"/>
    <property type="match status" value="1"/>
</dbReference>
<dbReference type="FunFam" id="3.40.50.10130:FF:000002">
    <property type="entry name" value="DNA repair endonuclease XPF"/>
    <property type="match status" value="1"/>
</dbReference>
<dbReference type="Gene3D" id="3.40.50.10130">
    <property type="match status" value="1"/>
</dbReference>
<dbReference type="Gene3D" id="1.10.150.20">
    <property type="entry name" value="5' to 3' exonuclease, C-terminal subdomain"/>
    <property type="match status" value="1"/>
</dbReference>
<dbReference type="InterPro" id="IPR006166">
    <property type="entry name" value="ERCC4_domain"/>
</dbReference>
<dbReference type="InterPro" id="IPR011335">
    <property type="entry name" value="Restrct_endonuc-II-like"/>
</dbReference>
<dbReference type="InterPro" id="IPR010994">
    <property type="entry name" value="RuvA_2-like"/>
</dbReference>
<dbReference type="InterPro" id="IPR006167">
    <property type="entry name" value="XPF"/>
</dbReference>
<dbReference type="InterPro" id="IPR047520">
    <property type="entry name" value="XPF_nuclease"/>
</dbReference>
<dbReference type="NCBIfam" id="TIGR00596">
    <property type="entry name" value="rad1"/>
    <property type="match status" value="1"/>
</dbReference>
<dbReference type="PANTHER" id="PTHR10150">
    <property type="entry name" value="DNA REPAIR ENDONUCLEASE XPF"/>
    <property type="match status" value="1"/>
</dbReference>
<dbReference type="PANTHER" id="PTHR10150:SF0">
    <property type="entry name" value="DNA REPAIR ENDONUCLEASE XPF"/>
    <property type="match status" value="1"/>
</dbReference>
<dbReference type="Pfam" id="PF02732">
    <property type="entry name" value="ERCC4"/>
    <property type="match status" value="1"/>
</dbReference>
<dbReference type="SMART" id="SM00891">
    <property type="entry name" value="ERCC4"/>
    <property type="match status" value="1"/>
</dbReference>
<dbReference type="SUPFAM" id="SSF52980">
    <property type="entry name" value="Restriction endonuclease-like"/>
    <property type="match status" value="1"/>
</dbReference>
<dbReference type="SUPFAM" id="SSF47781">
    <property type="entry name" value="RuvA domain 2-like"/>
    <property type="match status" value="1"/>
</dbReference>
<name>RAD16_SCHPO</name>